<organism>
    <name type="scientific">Escherichia coli (strain K12 / DH10B)</name>
    <dbReference type="NCBI Taxonomy" id="316385"/>
    <lineage>
        <taxon>Bacteria</taxon>
        <taxon>Pseudomonadati</taxon>
        <taxon>Pseudomonadota</taxon>
        <taxon>Gammaproteobacteria</taxon>
        <taxon>Enterobacterales</taxon>
        <taxon>Enterobacteriaceae</taxon>
        <taxon>Escherichia</taxon>
    </lineage>
</organism>
<reference key="1">
    <citation type="journal article" date="2008" name="J. Bacteriol.">
        <title>The complete genome sequence of Escherichia coli DH10B: insights into the biology of a laboratory workhorse.</title>
        <authorList>
            <person name="Durfee T."/>
            <person name="Nelson R."/>
            <person name="Baldwin S."/>
            <person name="Plunkett G. III"/>
            <person name="Burland V."/>
            <person name="Mau B."/>
            <person name="Petrosino J.F."/>
            <person name="Qin X."/>
            <person name="Muzny D.M."/>
            <person name="Ayele M."/>
            <person name="Gibbs R.A."/>
            <person name="Csorgo B."/>
            <person name="Posfai G."/>
            <person name="Weinstock G.M."/>
            <person name="Blattner F.R."/>
        </authorList>
    </citation>
    <scope>NUCLEOTIDE SEQUENCE [LARGE SCALE GENOMIC DNA]</scope>
    <source>
        <strain>K12 / DH10B</strain>
    </source>
</reference>
<evidence type="ECO:0000255" key="1">
    <source>
        <dbReference type="HAMAP-Rule" id="MF_00333"/>
    </source>
</evidence>
<protein>
    <recommendedName>
        <fullName evidence="1">Oxygen-dependent coproporphyrinogen-III oxidase</fullName>
        <shortName evidence="1">CPO</shortName>
        <shortName evidence="1">Coprogen oxidase</shortName>
        <shortName evidence="1">Coproporphyrinogenase</shortName>
        <ecNumber evidence="1">1.3.3.3</ecNumber>
    </recommendedName>
</protein>
<feature type="chain" id="PRO_1000119799" description="Oxygen-dependent coproporphyrinogen-III oxidase">
    <location>
        <begin position="1"/>
        <end position="299"/>
    </location>
</feature>
<feature type="region of interest" description="Important for dimerization" evidence="1">
    <location>
        <begin position="240"/>
        <end position="275"/>
    </location>
</feature>
<feature type="active site" description="Proton donor" evidence="1">
    <location>
        <position position="106"/>
    </location>
</feature>
<feature type="binding site" evidence="1">
    <location>
        <position position="92"/>
    </location>
    <ligand>
        <name>substrate</name>
    </ligand>
</feature>
<feature type="binding site" evidence="1">
    <location>
        <position position="96"/>
    </location>
    <ligand>
        <name>Mn(2+)</name>
        <dbReference type="ChEBI" id="CHEBI:29035"/>
    </ligand>
</feature>
<feature type="binding site" evidence="1">
    <location>
        <position position="106"/>
    </location>
    <ligand>
        <name>Mn(2+)</name>
        <dbReference type="ChEBI" id="CHEBI:29035"/>
    </ligand>
</feature>
<feature type="binding site" evidence="1">
    <location>
        <begin position="108"/>
        <end position="110"/>
    </location>
    <ligand>
        <name>substrate</name>
    </ligand>
</feature>
<feature type="binding site" evidence="1">
    <location>
        <position position="145"/>
    </location>
    <ligand>
        <name>Mn(2+)</name>
        <dbReference type="ChEBI" id="CHEBI:29035"/>
    </ligand>
</feature>
<feature type="binding site" evidence="1">
    <location>
        <position position="175"/>
    </location>
    <ligand>
        <name>Mn(2+)</name>
        <dbReference type="ChEBI" id="CHEBI:29035"/>
    </ligand>
</feature>
<feature type="binding site" evidence="1">
    <location>
        <begin position="258"/>
        <end position="260"/>
    </location>
    <ligand>
        <name>substrate</name>
    </ligand>
</feature>
<feature type="site" description="Important for dimerization" evidence="1">
    <location>
        <position position="175"/>
    </location>
</feature>
<dbReference type="EC" id="1.3.3.3" evidence="1"/>
<dbReference type="EMBL" id="CP000948">
    <property type="protein sequence ID" value="ACB03587.1"/>
    <property type="molecule type" value="Genomic_DNA"/>
</dbReference>
<dbReference type="RefSeq" id="WP_000801365.1">
    <property type="nucleotide sequence ID" value="NC_010473.1"/>
</dbReference>
<dbReference type="SMR" id="B1XAA7"/>
<dbReference type="KEGG" id="ecd:ECDH10B_2601"/>
<dbReference type="HOGENOM" id="CLU_026169_0_1_6"/>
<dbReference type="UniPathway" id="UPA00251">
    <property type="reaction ID" value="UER00322"/>
</dbReference>
<dbReference type="GO" id="GO:0005737">
    <property type="term" value="C:cytoplasm"/>
    <property type="evidence" value="ECO:0007669"/>
    <property type="project" value="UniProtKB-SubCell"/>
</dbReference>
<dbReference type="GO" id="GO:0004109">
    <property type="term" value="F:coproporphyrinogen oxidase activity"/>
    <property type="evidence" value="ECO:0007669"/>
    <property type="project" value="UniProtKB-UniRule"/>
</dbReference>
<dbReference type="GO" id="GO:0030145">
    <property type="term" value="F:manganese ion binding"/>
    <property type="evidence" value="ECO:0007669"/>
    <property type="project" value="UniProtKB-UniRule"/>
</dbReference>
<dbReference type="GO" id="GO:0042803">
    <property type="term" value="F:protein homodimerization activity"/>
    <property type="evidence" value="ECO:0000250"/>
    <property type="project" value="UniProtKB"/>
</dbReference>
<dbReference type="GO" id="GO:0006782">
    <property type="term" value="P:protoporphyrinogen IX biosynthetic process"/>
    <property type="evidence" value="ECO:0007669"/>
    <property type="project" value="UniProtKB-UniRule"/>
</dbReference>
<dbReference type="FunFam" id="3.40.1500.10:FF:000001">
    <property type="entry name" value="Oxygen-dependent coproporphyrinogen-III oxidase"/>
    <property type="match status" value="1"/>
</dbReference>
<dbReference type="Gene3D" id="3.40.1500.10">
    <property type="entry name" value="Coproporphyrinogen III oxidase, aerobic"/>
    <property type="match status" value="1"/>
</dbReference>
<dbReference type="HAMAP" id="MF_00333">
    <property type="entry name" value="Coprogen_oxidas"/>
    <property type="match status" value="1"/>
</dbReference>
<dbReference type="InterPro" id="IPR001260">
    <property type="entry name" value="Coprogen_oxidase_aer"/>
</dbReference>
<dbReference type="InterPro" id="IPR036406">
    <property type="entry name" value="Coprogen_oxidase_aer_sf"/>
</dbReference>
<dbReference type="InterPro" id="IPR018375">
    <property type="entry name" value="Coprogen_oxidase_CS"/>
</dbReference>
<dbReference type="NCBIfam" id="NF003727">
    <property type="entry name" value="PRK05330.1"/>
    <property type="match status" value="1"/>
</dbReference>
<dbReference type="PANTHER" id="PTHR10755">
    <property type="entry name" value="COPROPORPHYRINOGEN III OXIDASE, MITOCHONDRIAL"/>
    <property type="match status" value="1"/>
</dbReference>
<dbReference type="PANTHER" id="PTHR10755:SF0">
    <property type="entry name" value="OXYGEN-DEPENDENT COPROPORPHYRINOGEN-III OXIDASE, MITOCHONDRIAL"/>
    <property type="match status" value="1"/>
</dbReference>
<dbReference type="Pfam" id="PF01218">
    <property type="entry name" value="Coprogen_oxidas"/>
    <property type="match status" value="1"/>
</dbReference>
<dbReference type="PIRSF" id="PIRSF000166">
    <property type="entry name" value="Coproporphyri_ox"/>
    <property type="match status" value="1"/>
</dbReference>
<dbReference type="PRINTS" id="PR00073">
    <property type="entry name" value="COPRGNOXDASE"/>
</dbReference>
<dbReference type="SUPFAM" id="SSF102886">
    <property type="entry name" value="Coproporphyrinogen III oxidase"/>
    <property type="match status" value="1"/>
</dbReference>
<dbReference type="PROSITE" id="PS01021">
    <property type="entry name" value="COPROGEN_OXIDASE"/>
    <property type="match status" value="1"/>
</dbReference>
<sequence length="299" mass="34323">MKPDAHQVKQFLLNLQDTICQQLTAVDGAEFVEDSWQREAGGGGRSRVLRNGGVFEQAGVNFSHVHGEAMPASATAHRPELAGRSFEAMGVSLVVHPHNPYVPTSHANVRFFIAEKPGADPVWWFGGGFDLTPFYGFEEDAIHWHRTARDLCLPFGEDVYPRYKKWCDEYFYLKHRNEQRGIGGLFFDDLNTPDFDRCFAFMQAVGKGYTDAYLPIVERRKAMAYGERERNFQLYRRGRYVEFNLVWDRGTLFGLQTGGRTESILMSMPPLVRWEYDYQPKDGSPEAALSEFIKVRDWV</sequence>
<gene>
    <name evidence="1" type="primary">hemF</name>
    <name type="ordered locus">ECDH10B_2601</name>
</gene>
<name>HEM6_ECODH</name>
<keyword id="KW-0963">Cytoplasm</keyword>
<keyword id="KW-0350">Heme biosynthesis</keyword>
<keyword id="KW-0464">Manganese</keyword>
<keyword id="KW-0479">Metal-binding</keyword>
<keyword id="KW-0560">Oxidoreductase</keyword>
<keyword id="KW-0627">Porphyrin biosynthesis</keyword>
<comment type="function">
    <text evidence="1">Involved in the heme biosynthesis. Catalyzes the aerobic oxidative decarboxylation of propionate groups of rings A and B of coproporphyrinogen-III to yield the vinyl groups in protoporphyrinogen-IX.</text>
</comment>
<comment type="catalytic activity">
    <reaction evidence="1">
        <text>coproporphyrinogen III + O2 + 2 H(+) = protoporphyrinogen IX + 2 CO2 + 2 H2O</text>
        <dbReference type="Rhea" id="RHEA:18257"/>
        <dbReference type="ChEBI" id="CHEBI:15377"/>
        <dbReference type="ChEBI" id="CHEBI:15378"/>
        <dbReference type="ChEBI" id="CHEBI:15379"/>
        <dbReference type="ChEBI" id="CHEBI:16526"/>
        <dbReference type="ChEBI" id="CHEBI:57307"/>
        <dbReference type="ChEBI" id="CHEBI:57309"/>
        <dbReference type="EC" id="1.3.3.3"/>
    </reaction>
</comment>
<comment type="cofactor">
    <cofactor evidence="1">
        <name>Mn(2+)</name>
        <dbReference type="ChEBI" id="CHEBI:29035"/>
    </cofactor>
</comment>
<comment type="pathway">
    <text evidence="1">Porphyrin-containing compound metabolism; protoporphyrin-IX biosynthesis; protoporphyrinogen-IX from coproporphyrinogen-III (O2 route): step 1/1.</text>
</comment>
<comment type="subunit">
    <text evidence="1">Homodimer.</text>
</comment>
<comment type="subcellular location">
    <subcellularLocation>
        <location evidence="1">Cytoplasm</location>
    </subcellularLocation>
</comment>
<comment type="similarity">
    <text evidence="1">Belongs to the aerobic coproporphyrinogen-III oxidase family.</text>
</comment>
<accession>B1XAA7</accession>
<proteinExistence type="inferred from homology"/>